<reference key="1">
    <citation type="journal article" date="2002" name="J. Bacteriol.">
        <title>Whole-genome comparison of Mycobacterium tuberculosis clinical and laboratory strains.</title>
        <authorList>
            <person name="Fleischmann R.D."/>
            <person name="Alland D."/>
            <person name="Eisen J.A."/>
            <person name="Carpenter L."/>
            <person name="White O."/>
            <person name="Peterson J.D."/>
            <person name="DeBoy R.T."/>
            <person name="Dodson R.J."/>
            <person name="Gwinn M.L."/>
            <person name="Haft D.H."/>
            <person name="Hickey E.K."/>
            <person name="Kolonay J.F."/>
            <person name="Nelson W.C."/>
            <person name="Umayam L.A."/>
            <person name="Ermolaeva M.D."/>
            <person name="Salzberg S.L."/>
            <person name="Delcher A."/>
            <person name="Utterback T.R."/>
            <person name="Weidman J.F."/>
            <person name="Khouri H.M."/>
            <person name="Gill J."/>
            <person name="Mikula A."/>
            <person name="Bishai W."/>
            <person name="Jacobs W.R. Jr."/>
            <person name="Venter J.C."/>
            <person name="Fraser C.M."/>
        </authorList>
    </citation>
    <scope>NUCLEOTIDE SEQUENCE [LARGE SCALE GENOMIC DNA]</scope>
    <source>
        <strain>CDC 1551 / Oshkosh</strain>
    </source>
</reference>
<reference key="2">
    <citation type="journal article" date="2015" name="MBio">
        <title>Deficiency of the novel exopolyphosphatase Rv1026/PPX2 leads to metabolic downshift and altered cell wall permeability in Mycobacterium tuberculosis.</title>
        <authorList>
            <person name="Chuang Y.M."/>
            <person name="Bandyopadhyay N."/>
            <person name="Rifat D."/>
            <person name="Rubin H."/>
            <person name="Bader J.S."/>
            <person name="Karakousis P.C."/>
        </authorList>
    </citation>
    <scope>FUNCTION</scope>
    <scope>CATALYTIC ACTIVITY</scope>
    <scope>ACTIVITY REGULATION</scope>
    <scope>DISRUPTION PHENOTYPE</scope>
    <source>
        <strain>CDC 1551 / Oshkosh</strain>
    </source>
</reference>
<comment type="function">
    <text evidence="2">Degradation of inorganic polyphosphates (polyP). Releases orthophosphate processively from the ends of the polyP chain. Prefers long-chain length polyphosphates as substrates.</text>
</comment>
<comment type="catalytic activity">
    <reaction evidence="2">
        <text>[phosphate](n) + H2O = [phosphate](n-1) + phosphate + H(+)</text>
        <dbReference type="Rhea" id="RHEA:21528"/>
        <dbReference type="Rhea" id="RHEA-COMP:9859"/>
        <dbReference type="Rhea" id="RHEA-COMP:14279"/>
        <dbReference type="ChEBI" id="CHEBI:15377"/>
        <dbReference type="ChEBI" id="CHEBI:15378"/>
        <dbReference type="ChEBI" id="CHEBI:16838"/>
        <dbReference type="ChEBI" id="CHEBI:43474"/>
        <dbReference type="EC" id="3.6.1.11"/>
    </reaction>
</comment>
<comment type="activity regulation">
    <text evidence="2">Exopolyphosphatase activity is inhibited by ppGpp alarmones produced during the bacterial stringent response.</text>
</comment>
<comment type="subunit">
    <text evidence="1">Homodimer.</text>
</comment>
<comment type="disruption phenotype">
    <text evidence="2">PPX2 deficiency leads to increased polyP levels, early bacterial growth arrest and reduced susceptibility to the first-line drug isoniazid, as well as increased bacterial survival during exposure to stress conditions and within macrophages. Mutant shows increased thickness of the cell wall and reduced drug permeability.</text>
</comment>
<comment type="similarity">
    <text evidence="4">Belongs to the GppA/Ppx family.</text>
</comment>
<keyword id="KW-0378">Hydrolase</keyword>
<keyword id="KW-1185">Reference proteome</keyword>
<dbReference type="EC" id="3.6.1.11" evidence="2"/>
<dbReference type="EMBL" id="AE000516">
    <property type="protein sequence ID" value="AAK45305.1"/>
    <property type="molecule type" value="Genomic_DNA"/>
</dbReference>
<dbReference type="PIR" id="E70623">
    <property type="entry name" value="E70623"/>
</dbReference>
<dbReference type="RefSeq" id="WP_003405299.1">
    <property type="nucleotide sequence ID" value="NZ_KK341227.1"/>
</dbReference>
<dbReference type="SMR" id="L7N5A6"/>
<dbReference type="GeneID" id="45424998"/>
<dbReference type="KEGG" id="mtc:MT1054"/>
<dbReference type="PATRIC" id="fig|83331.31.peg.1131"/>
<dbReference type="HOGENOM" id="CLU_025908_1_2_11"/>
<dbReference type="Proteomes" id="UP000001020">
    <property type="component" value="Chromosome"/>
</dbReference>
<dbReference type="GO" id="GO:0004309">
    <property type="term" value="F:exopolyphosphatase activity"/>
    <property type="evidence" value="ECO:0007669"/>
    <property type="project" value="UniProtKB-EC"/>
</dbReference>
<dbReference type="CDD" id="cd24119">
    <property type="entry name" value="ASKHA_NBD_MtPPX2-like"/>
    <property type="match status" value="1"/>
</dbReference>
<dbReference type="FunFam" id="3.30.420.40:FF:000305">
    <property type="entry name" value="Exopolyphosphatase 2"/>
    <property type="match status" value="1"/>
</dbReference>
<dbReference type="Gene3D" id="3.30.420.40">
    <property type="match status" value="1"/>
</dbReference>
<dbReference type="Gene3D" id="3.30.420.150">
    <property type="entry name" value="Exopolyphosphatase. Domain 2"/>
    <property type="match status" value="1"/>
</dbReference>
<dbReference type="InterPro" id="IPR043129">
    <property type="entry name" value="ATPase_NBD"/>
</dbReference>
<dbReference type="InterPro" id="IPR050273">
    <property type="entry name" value="GppA/Ppx_hydrolase"/>
</dbReference>
<dbReference type="InterPro" id="IPR003695">
    <property type="entry name" value="Ppx_GppA_N"/>
</dbReference>
<dbReference type="PANTHER" id="PTHR30005">
    <property type="entry name" value="EXOPOLYPHOSPHATASE"/>
    <property type="match status" value="1"/>
</dbReference>
<dbReference type="PANTHER" id="PTHR30005:SF13">
    <property type="entry name" value="EXOPOLYPHOSPHATASE 2"/>
    <property type="match status" value="1"/>
</dbReference>
<dbReference type="Pfam" id="PF02541">
    <property type="entry name" value="Ppx-GppA"/>
    <property type="match status" value="1"/>
</dbReference>
<dbReference type="SUPFAM" id="SSF53067">
    <property type="entry name" value="Actin-like ATPase domain"/>
    <property type="match status" value="2"/>
</dbReference>
<protein>
    <recommendedName>
        <fullName evidence="4">Exopolyphosphatase 2</fullName>
        <shortName evidence="4">ExopolyPase 2</shortName>
        <ecNumber evidence="2">3.6.1.11</ecNumber>
    </recommendedName>
    <alternativeName>
        <fullName evidence="3">PPX2</fullName>
    </alternativeName>
</protein>
<sequence>MALTRVAAIDCGTNSIRLLIADVGAGLARGELHDVHRETRIVRLGQGVDATGRFAPEAIARTRTALTDYAELLTFHHAERVRMVATSAARDVVNRDVFFAMTADVLGAALPGSAAEVITGAEEAELSFRGAVGELGSAGAPFVVVDLGGGSTEIVLGEHEVVASYSADIGCVRLTERCLHSDPPTLQEVSTARRLVRERLEPALRTVPLELARTWVGLAGTMTTLSALAQSMTAYDAAAIHLSRVPGADLLEVCQRLIGMTRKQRAALAPMHPGRADVIGGGAIVVEELARELRERAGIDQLTVSEHDILDGIALSLAG</sequence>
<proteinExistence type="evidence at protein level"/>
<evidence type="ECO:0000250" key="1">
    <source>
        <dbReference type="UniProtKB" id="P96374"/>
    </source>
</evidence>
<evidence type="ECO:0000269" key="2">
    <source>
    </source>
</evidence>
<evidence type="ECO:0000303" key="3">
    <source>
    </source>
</evidence>
<evidence type="ECO:0000305" key="4"/>
<evidence type="ECO:0000312" key="5">
    <source>
        <dbReference type="EMBL" id="AAK45305.1"/>
    </source>
</evidence>
<gene>
    <name evidence="3" type="primary">ppx2</name>
    <name evidence="5" type="ordered locus">MT1054</name>
</gene>
<name>PPX2_MYCTO</name>
<feature type="chain" id="PRO_0000440101" description="Exopolyphosphatase 2">
    <location>
        <begin position="1"/>
        <end position="319"/>
    </location>
</feature>
<accession>L7N5A6</accession>
<organism>
    <name type="scientific">Mycobacterium tuberculosis (strain CDC 1551 / Oshkosh)</name>
    <dbReference type="NCBI Taxonomy" id="83331"/>
    <lineage>
        <taxon>Bacteria</taxon>
        <taxon>Bacillati</taxon>
        <taxon>Actinomycetota</taxon>
        <taxon>Actinomycetes</taxon>
        <taxon>Mycobacteriales</taxon>
        <taxon>Mycobacteriaceae</taxon>
        <taxon>Mycobacterium</taxon>
        <taxon>Mycobacterium tuberculosis complex</taxon>
    </lineage>
</organism>